<gene>
    <name evidence="1" type="primary">rpsL</name>
    <name type="ordered locus">PAM_262</name>
</gene>
<protein>
    <recommendedName>
        <fullName evidence="1">Small ribosomal subunit protein uS12</fullName>
    </recommendedName>
    <alternativeName>
        <fullName evidence="3">30S ribosomal protein S12</fullName>
    </alternativeName>
</protein>
<comment type="function">
    <text evidence="1">With S4 and S5 plays an important role in translational accuracy.</text>
</comment>
<comment type="function">
    <text evidence="1">Interacts with and stabilizes bases of the 16S rRNA that are involved in tRNA selection in the A site and with the mRNA backbone. Located at the interface of the 30S and 50S subunits, it traverses the body of the 30S subunit contacting proteins on the other side and probably holding the rRNA structure together. The combined cluster of proteins S8, S12 and S17 appears to hold together the shoulder and platform of the 30S subunit.</text>
</comment>
<comment type="subunit">
    <text evidence="1">Part of the 30S ribosomal subunit. Contacts proteins S8 and S17. May interact with IF1 in the 30S initiation complex.</text>
</comment>
<comment type="similarity">
    <text evidence="1">Belongs to the universal ribosomal protein uS12 family.</text>
</comment>
<comment type="caution">
    <text evidence="3">Because the enzyme that would modify Asp-102 to 3-methylthioaspartic acid has not been found in the proteome of this organism, that modification is not predicted.</text>
</comment>
<dbReference type="EMBL" id="AP006628">
    <property type="protein sequence ID" value="BAD04347.1"/>
    <property type="molecule type" value="Genomic_DNA"/>
</dbReference>
<dbReference type="SMR" id="Q6YQW1"/>
<dbReference type="STRING" id="262768.PAM_262"/>
<dbReference type="KEGG" id="poy:PAM_262"/>
<dbReference type="eggNOG" id="COG0048">
    <property type="taxonomic scope" value="Bacteria"/>
</dbReference>
<dbReference type="HOGENOM" id="CLU_104295_1_2_14"/>
<dbReference type="BioCyc" id="OYEL262768:G1G26-319-MONOMER"/>
<dbReference type="Proteomes" id="UP000002523">
    <property type="component" value="Chromosome"/>
</dbReference>
<dbReference type="GO" id="GO:0015935">
    <property type="term" value="C:small ribosomal subunit"/>
    <property type="evidence" value="ECO:0007669"/>
    <property type="project" value="InterPro"/>
</dbReference>
<dbReference type="GO" id="GO:0019843">
    <property type="term" value="F:rRNA binding"/>
    <property type="evidence" value="ECO:0007669"/>
    <property type="project" value="UniProtKB-UniRule"/>
</dbReference>
<dbReference type="GO" id="GO:0003735">
    <property type="term" value="F:structural constituent of ribosome"/>
    <property type="evidence" value="ECO:0007669"/>
    <property type="project" value="InterPro"/>
</dbReference>
<dbReference type="GO" id="GO:0000049">
    <property type="term" value="F:tRNA binding"/>
    <property type="evidence" value="ECO:0007669"/>
    <property type="project" value="UniProtKB-UniRule"/>
</dbReference>
<dbReference type="GO" id="GO:0006412">
    <property type="term" value="P:translation"/>
    <property type="evidence" value="ECO:0007669"/>
    <property type="project" value="UniProtKB-UniRule"/>
</dbReference>
<dbReference type="CDD" id="cd03368">
    <property type="entry name" value="Ribosomal_S12"/>
    <property type="match status" value="1"/>
</dbReference>
<dbReference type="FunFam" id="2.40.50.140:FF:000099">
    <property type="entry name" value="Ribosomal protein S12, mitochondrial"/>
    <property type="match status" value="1"/>
</dbReference>
<dbReference type="Gene3D" id="2.40.50.140">
    <property type="entry name" value="Nucleic acid-binding proteins"/>
    <property type="match status" value="1"/>
</dbReference>
<dbReference type="HAMAP" id="MF_00403_B">
    <property type="entry name" value="Ribosomal_uS12_B"/>
    <property type="match status" value="1"/>
</dbReference>
<dbReference type="InterPro" id="IPR012340">
    <property type="entry name" value="NA-bd_OB-fold"/>
</dbReference>
<dbReference type="InterPro" id="IPR006032">
    <property type="entry name" value="Ribosomal_uS12"/>
</dbReference>
<dbReference type="InterPro" id="IPR005679">
    <property type="entry name" value="Ribosomal_uS12_bac"/>
</dbReference>
<dbReference type="NCBIfam" id="TIGR00981">
    <property type="entry name" value="rpsL_bact"/>
    <property type="match status" value="1"/>
</dbReference>
<dbReference type="PANTHER" id="PTHR11652">
    <property type="entry name" value="30S RIBOSOMAL PROTEIN S12 FAMILY MEMBER"/>
    <property type="match status" value="1"/>
</dbReference>
<dbReference type="Pfam" id="PF00164">
    <property type="entry name" value="Ribosom_S12_S23"/>
    <property type="match status" value="1"/>
</dbReference>
<dbReference type="PIRSF" id="PIRSF002133">
    <property type="entry name" value="Ribosomal_S12/S23"/>
    <property type="match status" value="1"/>
</dbReference>
<dbReference type="PRINTS" id="PR01034">
    <property type="entry name" value="RIBOSOMALS12"/>
</dbReference>
<dbReference type="SUPFAM" id="SSF50249">
    <property type="entry name" value="Nucleic acid-binding proteins"/>
    <property type="match status" value="1"/>
</dbReference>
<dbReference type="PROSITE" id="PS00055">
    <property type="entry name" value="RIBOSOMAL_S12"/>
    <property type="match status" value="1"/>
</dbReference>
<reference key="1">
    <citation type="journal article" date="2004" name="Nat. Genet.">
        <title>Reductive evolution suggested from the complete genome sequence of a plant-pathogenic phytoplasma.</title>
        <authorList>
            <person name="Oshima K."/>
            <person name="Kakizawa S."/>
            <person name="Nishigawa H."/>
            <person name="Jung H.-Y."/>
            <person name="Wei W."/>
            <person name="Suzuki S."/>
            <person name="Arashida R."/>
            <person name="Nakata D."/>
            <person name="Miyata S."/>
            <person name="Ugaki M."/>
            <person name="Namba S."/>
        </authorList>
    </citation>
    <scope>NUCLEOTIDE SEQUENCE [LARGE SCALE GENOMIC DNA]</scope>
    <source>
        <strain>OY-M</strain>
    </source>
</reference>
<keyword id="KW-0687">Ribonucleoprotein</keyword>
<keyword id="KW-0689">Ribosomal protein</keyword>
<keyword id="KW-0694">RNA-binding</keyword>
<keyword id="KW-0699">rRNA-binding</keyword>
<keyword id="KW-0820">tRNA-binding</keyword>
<sequence length="139" mass="15277">MSTVSQLIKKRRSSKTSKTKAPALSYGFNVLQKKAKHYSSPQKMGVCLRVTTMTPKKPNSALRKFARVRLSNGSEVTAYIPGVGHSLQEHSSVLVRGGRVKDLPGVRYHIVRGALDATGVANRKQGRSKYGSKLPKEKK</sequence>
<accession>Q6YQW1</accession>
<name>RS12_ONYPE</name>
<feature type="chain" id="PRO_0000146279" description="Small ribosomal subunit protein uS12">
    <location>
        <begin position="1"/>
        <end position="139"/>
    </location>
</feature>
<feature type="region of interest" description="Disordered" evidence="2">
    <location>
        <begin position="1"/>
        <end position="21"/>
    </location>
</feature>
<feature type="compositionally biased region" description="Basic residues" evidence="2">
    <location>
        <begin position="8"/>
        <end position="18"/>
    </location>
</feature>
<proteinExistence type="inferred from homology"/>
<organism>
    <name type="scientific">Onion yellows phytoplasma (strain OY-M)</name>
    <dbReference type="NCBI Taxonomy" id="262768"/>
    <lineage>
        <taxon>Bacteria</taxon>
        <taxon>Bacillati</taxon>
        <taxon>Mycoplasmatota</taxon>
        <taxon>Mollicutes</taxon>
        <taxon>Acholeplasmatales</taxon>
        <taxon>Acholeplasmataceae</taxon>
        <taxon>Candidatus Phytoplasma</taxon>
        <taxon>16SrI (Aster yellows group)</taxon>
    </lineage>
</organism>
<evidence type="ECO:0000255" key="1">
    <source>
        <dbReference type="HAMAP-Rule" id="MF_00403"/>
    </source>
</evidence>
<evidence type="ECO:0000256" key="2">
    <source>
        <dbReference type="SAM" id="MobiDB-lite"/>
    </source>
</evidence>
<evidence type="ECO:0000305" key="3"/>